<dbReference type="EMBL" id="L32744">
    <property type="protein sequence ID" value="AAA99479.1"/>
    <property type="molecule type" value="Genomic_DNA"/>
</dbReference>
<dbReference type="GO" id="GO:0000786">
    <property type="term" value="C:nucleosome"/>
    <property type="evidence" value="ECO:0007669"/>
    <property type="project" value="UniProtKB-KW"/>
</dbReference>
<dbReference type="GO" id="GO:0005634">
    <property type="term" value="C:nucleus"/>
    <property type="evidence" value="ECO:0007669"/>
    <property type="project" value="UniProtKB-SubCell"/>
</dbReference>
<dbReference type="GO" id="GO:0003677">
    <property type="term" value="F:DNA binding"/>
    <property type="evidence" value="ECO:0007669"/>
    <property type="project" value="UniProtKB-KW"/>
</dbReference>
<dbReference type="GO" id="GO:0030261">
    <property type="term" value="P:chromosome condensation"/>
    <property type="evidence" value="ECO:0007669"/>
    <property type="project" value="UniProtKB-KW"/>
</dbReference>
<dbReference type="GO" id="GO:0035092">
    <property type="term" value="P:sperm DNA condensation"/>
    <property type="evidence" value="ECO:0007669"/>
    <property type="project" value="InterPro"/>
</dbReference>
<dbReference type="InterPro" id="IPR000221">
    <property type="entry name" value="Protamine_P1"/>
</dbReference>
<dbReference type="PROSITE" id="PS00048">
    <property type="entry name" value="PROTAMINE_P1"/>
    <property type="match status" value="1"/>
</dbReference>
<comment type="function">
    <text>Protamines substitute for histones in the chromatin of sperm during the haploid phase of spermatogenesis. They compact sperm DNA into a highly condensed, stable and inactive complex.</text>
</comment>
<comment type="subcellular location">
    <subcellularLocation>
        <location>Nucleus</location>
    </subcellularLocation>
    <subcellularLocation>
        <location>Chromosome</location>
    </subcellularLocation>
</comment>
<comment type="tissue specificity">
    <text>Testis.</text>
</comment>
<comment type="similarity">
    <text evidence="2">Belongs to the protamine P1 family.</text>
</comment>
<accession>P42152</accession>
<proteinExistence type="evidence at transcript level"/>
<sequence length="62" mass="8702">MARYRHSRSRSRSRYRRRRRRRRSRYRSRRRRYRRSRRRRRRGRRRRGYSRRRYSRRGRRRY</sequence>
<feature type="chain" id="PRO_0000191587" description="Sperm protamine P1">
    <location>
        <begin position="1"/>
        <end position="62"/>
    </location>
</feature>
<feature type="region of interest" description="Disordered" evidence="1">
    <location>
        <begin position="1"/>
        <end position="62"/>
    </location>
</feature>
<organism>
    <name type="scientific">Trichosurus vulpecula</name>
    <name type="common">Brush-tailed possum</name>
    <dbReference type="NCBI Taxonomy" id="9337"/>
    <lineage>
        <taxon>Eukaryota</taxon>
        <taxon>Metazoa</taxon>
        <taxon>Chordata</taxon>
        <taxon>Craniata</taxon>
        <taxon>Vertebrata</taxon>
        <taxon>Euteleostomi</taxon>
        <taxon>Mammalia</taxon>
        <taxon>Metatheria</taxon>
        <taxon>Diprotodontia</taxon>
        <taxon>Phalangeridae</taxon>
        <taxon>Trichosurus</taxon>
    </lineage>
</organism>
<evidence type="ECO:0000256" key="1">
    <source>
        <dbReference type="SAM" id="MobiDB-lite"/>
    </source>
</evidence>
<evidence type="ECO:0000305" key="2"/>
<gene>
    <name type="primary">PRM1</name>
</gene>
<name>HSP1_TRIVU</name>
<reference key="1">
    <citation type="journal article" date="1995" name="Proc. R. Soc. B">
        <title>Molecular phylogeny and evolution of marsupial protamine P1 genes.</title>
        <authorList>
            <person name="Retief J.D."/>
            <person name="Krajewski C."/>
            <person name="Westerman M."/>
            <person name="Winkfein R.J."/>
            <person name="Dixon G.H."/>
        </authorList>
    </citation>
    <scope>NUCLEOTIDE SEQUENCE [GENOMIC DNA]</scope>
    <source>
        <tissue>Sperm</tissue>
    </source>
</reference>
<keyword id="KW-0158">Chromosome</keyword>
<keyword id="KW-0217">Developmental protein</keyword>
<keyword id="KW-0221">Differentiation</keyword>
<keyword id="KW-0226">DNA condensation</keyword>
<keyword id="KW-0238">DNA-binding</keyword>
<keyword id="KW-0544">Nucleosome core</keyword>
<keyword id="KW-0539">Nucleus</keyword>
<keyword id="KW-0744">Spermatogenesis</keyword>
<protein>
    <recommendedName>
        <fullName>Sperm protamine P1</fullName>
    </recommendedName>
</protein>